<organism>
    <name type="scientific">Xenopus laevis</name>
    <name type="common">African clawed frog</name>
    <dbReference type="NCBI Taxonomy" id="8355"/>
    <lineage>
        <taxon>Eukaryota</taxon>
        <taxon>Metazoa</taxon>
        <taxon>Chordata</taxon>
        <taxon>Craniata</taxon>
        <taxon>Vertebrata</taxon>
        <taxon>Euteleostomi</taxon>
        <taxon>Amphibia</taxon>
        <taxon>Batrachia</taxon>
        <taxon>Anura</taxon>
        <taxon>Pipoidea</taxon>
        <taxon>Pipidae</taxon>
        <taxon>Xenopodinae</taxon>
        <taxon>Xenopus</taxon>
        <taxon>Xenopus</taxon>
    </lineage>
</organism>
<dbReference type="EMBL" id="BC082203">
    <property type="protein sequence ID" value="AAH82203.1"/>
    <property type="status" value="ALT_SEQ"/>
    <property type="molecule type" value="mRNA"/>
</dbReference>
<dbReference type="RefSeq" id="NP_001087951.2">
    <property type="nucleotide sequence ID" value="NM_001094482.2"/>
</dbReference>
<dbReference type="DNASU" id="494630"/>
<dbReference type="GeneID" id="494630"/>
<dbReference type="KEGG" id="xla:494630"/>
<dbReference type="AGR" id="Xenbase:XB-GENE-5939253"/>
<dbReference type="CTD" id="494630"/>
<dbReference type="Xenbase" id="XB-GENE-5939253">
    <property type="gene designation" value="selenok.S"/>
</dbReference>
<dbReference type="OrthoDB" id="167295at2759"/>
<dbReference type="Proteomes" id="UP000186698">
    <property type="component" value="Chromosome 4S"/>
</dbReference>
<dbReference type="Bgee" id="494630">
    <property type="expression patterns" value="Expressed in testis and 19 other cell types or tissues"/>
</dbReference>
<dbReference type="GO" id="GO:0005783">
    <property type="term" value="C:endoplasmic reticulum"/>
    <property type="evidence" value="ECO:0000250"/>
    <property type="project" value="UniProtKB"/>
</dbReference>
<dbReference type="GO" id="GO:0005789">
    <property type="term" value="C:endoplasmic reticulum membrane"/>
    <property type="evidence" value="ECO:0000250"/>
    <property type="project" value="UniProtKB"/>
</dbReference>
<dbReference type="GO" id="GO:0005794">
    <property type="term" value="C:Golgi apparatus"/>
    <property type="evidence" value="ECO:0000318"/>
    <property type="project" value="GO_Central"/>
</dbReference>
<dbReference type="GO" id="GO:0005886">
    <property type="term" value="C:plasma membrane"/>
    <property type="evidence" value="ECO:0007669"/>
    <property type="project" value="UniProtKB-SubCell"/>
</dbReference>
<dbReference type="GO" id="GO:0006816">
    <property type="term" value="P:calcium ion transport"/>
    <property type="evidence" value="ECO:0000318"/>
    <property type="project" value="GO_Central"/>
</dbReference>
<dbReference type="GO" id="GO:0032469">
    <property type="term" value="P:endoplasmic reticulum calcium ion homeostasis"/>
    <property type="evidence" value="ECO:0000318"/>
    <property type="project" value="GO_Central"/>
</dbReference>
<dbReference type="GO" id="GO:0018345">
    <property type="term" value="P:protein palmitoylation"/>
    <property type="evidence" value="ECO:0000250"/>
    <property type="project" value="UniProtKB"/>
</dbReference>
<dbReference type="InterPro" id="IPR024491">
    <property type="entry name" value="Se_SelK/SelG"/>
</dbReference>
<dbReference type="PANTHER" id="PTHR16875">
    <property type="entry name" value="SELENOPROTEIN K"/>
    <property type="match status" value="1"/>
</dbReference>
<dbReference type="PANTHER" id="PTHR16875:SF0">
    <property type="entry name" value="SELENOPROTEIN K"/>
    <property type="match status" value="1"/>
</dbReference>
<dbReference type="Pfam" id="PF10961">
    <property type="entry name" value="SelK_SelG"/>
    <property type="match status" value="1"/>
</dbReference>
<gene>
    <name type="primary">selenok</name>
    <name type="synonym">selk</name>
</gene>
<evidence type="ECO:0000250" key="1"/>
<evidence type="ECO:0000250" key="2">
    <source>
        <dbReference type="UniProtKB" id="Q9JLJ1"/>
    </source>
</evidence>
<evidence type="ECO:0000250" key="3">
    <source>
        <dbReference type="UniProtKB" id="Q9Y6D0"/>
    </source>
</evidence>
<evidence type="ECO:0000255" key="4"/>
<evidence type="ECO:0000256" key="5">
    <source>
        <dbReference type="SAM" id="MobiDB-lite"/>
    </source>
</evidence>
<evidence type="ECO:0000305" key="6"/>
<name>SELK_XENLA</name>
<accession>Q641S4</accession>
<keyword id="KW-0106">Calcium</keyword>
<keyword id="KW-0109">Calcium transport</keyword>
<keyword id="KW-1003">Cell membrane</keyword>
<keyword id="KW-0256">Endoplasmic reticulum</keyword>
<keyword id="KW-0406">Ion transport</keyword>
<keyword id="KW-0472">Membrane</keyword>
<keyword id="KW-1185">Reference proteome</keyword>
<keyword id="KW-0712">Selenocysteine</keyword>
<keyword id="KW-0812">Transmembrane</keyword>
<keyword id="KW-1133">Transmembrane helix</keyword>
<keyword id="KW-0813">Transport</keyword>
<feature type="chain" id="PRO_0000290206" description="Selenoprotein K">
    <location>
        <begin position="1"/>
        <end position="95"/>
    </location>
</feature>
<feature type="transmembrane region" description="Helical" evidence="4">
    <location>
        <begin position="20"/>
        <end position="42"/>
    </location>
</feature>
<feature type="region of interest" description="Disordered" evidence="5">
    <location>
        <begin position="47"/>
        <end position="95"/>
    </location>
</feature>
<feature type="non-standard amino acid" description="Selenocysteine" evidence="1">
    <location>
        <position position="93"/>
    </location>
</feature>
<reference key="1">
    <citation type="submission" date="2004-09" db="EMBL/GenBank/DDBJ databases">
        <authorList>
            <consortium name="NIH - Xenopus Gene Collection (XGC) project"/>
        </authorList>
    </citation>
    <scope>NUCLEOTIDE SEQUENCE [LARGE SCALE MRNA]</scope>
    <source>
        <tissue>Testis</tissue>
    </source>
</reference>
<proteinExistence type="inferred from homology"/>
<protein>
    <recommendedName>
        <fullName evidence="3">Selenoprotein K</fullName>
        <shortName>SelK</shortName>
    </recommendedName>
</protein>
<sequence length="95" mass="10418">MVYISNGQVLDGQSRSPWRLSFLTDMFWGITDFVVMFFQSIIHPNVTRRGCQNSSSSTRYDDGRGPPGHPRRMGRINHGSGPSAPPMAGGGGUGR</sequence>
<comment type="function">
    <text evidence="2 3">Required for Ca(2+) flux in immune cells and plays a role in T-cell proliferation and in T-cell and neutrophil migration (By similarity). Involved in endoplasmic reticulum-associated degradation (ERAD) of soluble glycosylated proteins (By similarity). Required for cell surface expression of CD36 and involved in macrophage uptake of low-density lipoprotein and in foam cell formation (By similarity). Required for palmitoylation (By similarity).</text>
</comment>
<comment type="subcellular location">
    <subcellularLocation>
        <location evidence="3">Endoplasmic reticulum membrane</location>
        <topology evidence="4">Single-pass membrane protein</topology>
    </subcellularLocation>
    <subcellularLocation>
        <location evidence="3">Cell membrane</location>
        <topology evidence="4">Single-pass membrane protein</topology>
    </subcellularLocation>
    <text evidence="3">Probably mainly localized in the ER.</text>
</comment>
<comment type="similarity">
    <text evidence="6">Belongs to the selenoprotein K family.</text>
</comment>
<comment type="sequence caution" evidence="6">
    <conflict type="erroneous termination">
        <sequence resource="EMBL-CDS" id="AAH82203"/>
    </conflict>
    <text>Truncated C-terminus.</text>
</comment>